<reference key="1">
    <citation type="journal article" date="1999" name="Biotechnol. Tech.">
        <title>Expression cloning in Kluyveromyces lactis.</title>
        <authorList>
            <person name="Vlugt-Bergmans C.J.B."/>
            <person name="van Ooyen A.J.J."/>
        </authorList>
    </citation>
    <scope>NUCLEOTIDE SEQUENCE [MRNA]</scope>
</reference>
<keyword id="KW-0119">Carbohydrate metabolism</keyword>
<keyword id="KW-0961">Cell wall biogenesis/degradation</keyword>
<keyword id="KW-0325">Glycoprotein</keyword>
<keyword id="KW-0326">Glycosidase</keyword>
<keyword id="KW-0378">Hydrolase</keyword>
<keyword id="KW-0624">Polysaccharide degradation</keyword>
<keyword id="KW-0964">Secreted</keyword>
<keyword id="KW-0732">Signal</keyword>
<organism>
    <name type="scientific">Aspergillus tubingensis</name>
    <dbReference type="NCBI Taxonomy" id="5068"/>
    <lineage>
        <taxon>Eukaryota</taxon>
        <taxon>Fungi</taxon>
        <taxon>Dikarya</taxon>
        <taxon>Ascomycota</taxon>
        <taxon>Pezizomycotina</taxon>
        <taxon>Eurotiomycetes</taxon>
        <taxon>Eurotiomycetidae</taxon>
        <taxon>Eurotiales</taxon>
        <taxon>Aspergillaceae</taxon>
        <taxon>Aspergillus</taxon>
        <taxon>Aspergillus subgen. Circumdati</taxon>
    </lineage>
</organism>
<protein>
    <recommendedName>
        <fullName>Probable arabinogalactan endo-beta-1,4-galactanase A</fullName>
        <ecNumber>3.2.1.89</ecNumber>
    </recommendedName>
    <alternativeName>
        <fullName>Endo-1,4-beta-galactanase A</fullName>
        <shortName>Galactanase A</shortName>
    </alternativeName>
</protein>
<gene>
    <name type="primary">galA</name>
</gene>
<proteinExistence type="evidence at transcript level"/>
<name>GANA_ASPTU</name>
<dbReference type="EC" id="3.2.1.89"/>
<dbReference type="EMBL" id="AJ012316">
    <property type="protein sequence ID" value="CAB40555.1"/>
    <property type="molecule type" value="mRNA"/>
</dbReference>
<dbReference type="SMR" id="Q9Y7F8"/>
<dbReference type="CAZy" id="GH53">
    <property type="family name" value="Glycoside Hydrolase Family 53"/>
</dbReference>
<dbReference type="GlyCosmos" id="Q9Y7F8">
    <property type="glycosylation" value="1 site, No reported glycans"/>
</dbReference>
<dbReference type="VEuPathDB" id="FungiDB:ASPTUDRAFT_112383"/>
<dbReference type="OMA" id="KYIHDEW"/>
<dbReference type="GO" id="GO:0005576">
    <property type="term" value="C:extracellular region"/>
    <property type="evidence" value="ECO:0000250"/>
    <property type="project" value="UniProtKB"/>
</dbReference>
<dbReference type="GO" id="GO:0031218">
    <property type="term" value="F:arabinogalactan endo-1,4-beta-galactosidase activity"/>
    <property type="evidence" value="ECO:0000250"/>
    <property type="project" value="UniProtKB"/>
</dbReference>
<dbReference type="GO" id="GO:0015926">
    <property type="term" value="F:glucosidase activity"/>
    <property type="evidence" value="ECO:0007669"/>
    <property type="project" value="InterPro"/>
</dbReference>
<dbReference type="GO" id="GO:0071555">
    <property type="term" value="P:cell wall organization"/>
    <property type="evidence" value="ECO:0007669"/>
    <property type="project" value="UniProtKB-KW"/>
</dbReference>
<dbReference type="GO" id="GO:0045490">
    <property type="term" value="P:pectin catabolic process"/>
    <property type="evidence" value="ECO:0000250"/>
    <property type="project" value="UniProtKB"/>
</dbReference>
<dbReference type="FunFam" id="3.20.20.80:FF:000077">
    <property type="entry name" value="Arabinogalactan endo-beta-1,4-galactanase"/>
    <property type="match status" value="1"/>
</dbReference>
<dbReference type="Gene3D" id="3.20.20.80">
    <property type="entry name" value="Glycosidases"/>
    <property type="match status" value="1"/>
</dbReference>
<dbReference type="InterPro" id="IPR011683">
    <property type="entry name" value="Glyco_hydro_53"/>
</dbReference>
<dbReference type="InterPro" id="IPR017853">
    <property type="entry name" value="Glycoside_hydrolase_SF"/>
</dbReference>
<dbReference type="PANTHER" id="PTHR34983">
    <property type="entry name" value="ARABINOGALACTAN ENDO-BETA-1,4-GALACTANASE A"/>
    <property type="match status" value="1"/>
</dbReference>
<dbReference type="PANTHER" id="PTHR34983:SF1">
    <property type="entry name" value="ARABINOGALACTAN ENDO-BETA-1,4-GALACTANASE A"/>
    <property type="match status" value="1"/>
</dbReference>
<dbReference type="Pfam" id="PF07745">
    <property type="entry name" value="Glyco_hydro_53"/>
    <property type="match status" value="1"/>
</dbReference>
<dbReference type="SUPFAM" id="SSF51445">
    <property type="entry name" value="(Trans)glycosidases"/>
    <property type="match status" value="1"/>
</dbReference>
<feature type="signal peptide" evidence="2">
    <location>
        <begin position="1"/>
        <end position="16"/>
    </location>
</feature>
<feature type="chain" id="PRO_0000394950" description="Probable arabinogalactan endo-beta-1,4-galactanase A">
    <location>
        <begin position="17"/>
        <end position="350"/>
    </location>
</feature>
<feature type="active site" description="Proton donor" evidence="1">
    <location>
        <position position="152"/>
    </location>
</feature>
<feature type="active site" description="Nucleophile" evidence="1">
    <location>
        <position position="262"/>
    </location>
</feature>
<feature type="glycosylation site" description="N-linked (GlcNAc...) asparagine" evidence="2">
    <location>
        <position position="128"/>
    </location>
</feature>
<accession>Q9Y7F8</accession>
<comment type="function">
    <text evidence="1">Endogalactanase involved in the degradation of plant cell wall polysaccharides, and more particularly of hairy regions of pectin.</text>
</comment>
<comment type="catalytic activity">
    <reaction>
        <text>The enzyme specifically hydrolyzes (1-&gt;4)-beta-D-galactosidic linkages in type I arabinogalactans.</text>
        <dbReference type="EC" id="3.2.1.89"/>
    </reaction>
</comment>
<comment type="subcellular location">
    <subcellularLocation>
        <location evidence="1">Secreted</location>
    </subcellularLocation>
</comment>
<comment type="similarity">
    <text evidence="3">Belongs to the glycosyl hydrolase 53 family.</text>
</comment>
<sequence length="350" mass="38734">MIYPLLLSALPLLSSAALTYRGADISSLLIEEDAGISYKNLNGETQALEDILVNNGVNSIRQRVWVDPSDGSYDLDYNLKLAKRVQAAGMSIYLDLHLSDTWADPSDQTTPTGWSTTDIDTLTWQLYNYTLEVCNTFAENDIDVEIVSIGNEISSGLLWPLGKTSNYDNIAKLLHSGAWGVKDSDLTTTPKIMIHLDNGWDWDEQEYFYKTVLATGSLLSTDFDLMGVSYYPFYSSEATLSSLKTSLTNMQSNYDKPVVVVETNWPVSCPDPEYSFPSDLTSIPFSAAGQEEFLEKLAEVVEGVTDGLGIYYWEPAWIDNAGLGSSCADNLMVDVNTDEVLESVTVFEDL</sequence>
<evidence type="ECO:0000250" key="1"/>
<evidence type="ECO:0000255" key="2"/>
<evidence type="ECO:0000305" key="3"/>